<organism>
    <name type="scientific">Sordaria macrospora (strain ATCC MYA-333 / DSM 997 / K(L3346) / K-hell)</name>
    <dbReference type="NCBI Taxonomy" id="771870"/>
    <lineage>
        <taxon>Eukaryota</taxon>
        <taxon>Fungi</taxon>
        <taxon>Dikarya</taxon>
        <taxon>Ascomycota</taxon>
        <taxon>Pezizomycotina</taxon>
        <taxon>Sordariomycetes</taxon>
        <taxon>Sordariomycetidae</taxon>
        <taxon>Sordariales</taxon>
        <taxon>Sordariaceae</taxon>
        <taxon>Sordaria</taxon>
    </lineage>
</organism>
<dbReference type="EC" id="3.4.16.6"/>
<dbReference type="EMBL" id="CABT02000026">
    <property type="protein sequence ID" value="CCC12394.1"/>
    <property type="molecule type" value="Genomic_DNA"/>
</dbReference>
<dbReference type="SMR" id="D1ZEM2"/>
<dbReference type="FunCoup" id="D1ZEM2">
    <property type="interactions" value="110"/>
</dbReference>
<dbReference type="STRING" id="771870.D1ZEM2"/>
<dbReference type="ESTHER" id="sormk-kex1">
    <property type="family name" value="Carboxypeptidase_S10"/>
</dbReference>
<dbReference type="MEROPS" id="S10.007"/>
<dbReference type="GlyCosmos" id="D1ZEM2">
    <property type="glycosylation" value="4 sites, No reported glycans"/>
</dbReference>
<dbReference type="VEuPathDB" id="FungiDB:SMAC_05571"/>
<dbReference type="eggNOG" id="KOG1282">
    <property type="taxonomic scope" value="Eukaryota"/>
</dbReference>
<dbReference type="HOGENOM" id="CLU_008523_11_0_1"/>
<dbReference type="InParanoid" id="D1ZEM2"/>
<dbReference type="OMA" id="EMADQFV"/>
<dbReference type="OrthoDB" id="443318at2759"/>
<dbReference type="Proteomes" id="UP000001881">
    <property type="component" value="Unassembled WGS sequence"/>
</dbReference>
<dbReference type="GO" id="GO:0016020">
    <property type="term" value="C:membrane"/>
    <property type="evidence" value="ECO:0007669"/>
    <property type="project" value="UniProtKB-KW"/>
</dbReference>
<dbReference type="GO" id="GO:0005802">
    <property type="term" value="C:trans-Golgi network"/>
    <property type="evidence" value="ECO:0007669"/>
    <property type="project" value="TreeGrafter"/>
</dbReference>
<dbReference type="GO" id="GO:0004185">
    <property type="term" value="F:serine-type carboxypeptidase activity"/>
    <property type="evidence" value="ECO:0007669"/>
    <property type="project" value="UniProtKB-EC"/>
</dbReference>
<dbReference type="GO" id="GO:0006915">
    <property type="term" value="P:apoptotic process"/>
    <property type="evidence" value="ECO:0007669"/>
    <property type="project" value="UniProtKB-KW"/>
</dbReference>
<dbReference type="GO" id="GO:0006508">
    <property type="term" value="P:proteolysis"/>
    <property type="evidence" value="ECO:0007669"/>
    <property type="project" value="UniProtKB-KW"/>
</dbReference>
<dbReference type="FunFam" id="3.40.50.1820:FF:000121">
    <property type="entry name" value="Carboxypeptidase D"/>
    <property type="match status" value="1"/>
</dbReference>
<dbReference type="Gene3D" id="3.40.50.1820">
    <property type="entry name" value="alpha/beta hydrolase"/>
    <property type="match status" value="1"/>
</dbReference>
<dbReference type="InterPro" id="IPR029058">
    <property type="entry name" value="AB_hydrolase_fold"/>
</dbReference>
<dbReference type="InterPro" id="IPR001563">
    <property type="entry name" value="Peptidase_S10"/>
</dbReference>
<dbReference type="InterPro" id="IPR018202">
    <property type="entry name" value="Ser_caboxypep_ser_AS"/>
</dbReference>
<dbReference type="PANTHER" id="PTHR11802:SF190">
    <property type="entry name" value="PHEROMONE-PROCESSING CARBOXYPEPTIDASE KEX1"/>
    <property type="match status" value="1"/>
</dbReference>
<dbReference type="PANTHER" id="PTHR11802">
    <property type="entry name" value="SERINE PROTEASE FAMILY S10 SERINE CARBOXYPEPTIDASE"/>
    <property type="match status" value="1"/>
</dbReference>
<dbReference type="Pfam" id="PF00450">
    <property type="entry name" value="Peptidase_S10"/>
    <property type="match status" value="1"/>
</dbReference>
<dbReference type="PRINTS" id="PR00724">
    <property type="entry name" value="CRBOXYPTASEC"/>
</dbReference>
<dbReference type="SUPFAM" id="SSF53474">
    <property type="entry name" value="alpha/beta-Hydrolases"/>
    <property type="match status" value="1"/>
</dbReference>
<dbReference type="PROSITE" id="PS00131">
    <property type="entry name" value="CARBOXYPEPT_SER_SER"/>
    <property type="match status" value="1"/>
</dbReference>
<comment type="function">
    <text evidence="1">Protease with a carboxypeptidase B-like function involved in the C-terminal processing of the lysine and arginine residues from protein precursors. Promotes cell fusion and is involved in the programmed cell death (By similarity).</text>
</comment>
<comment type="catalytic activity">
    <reaction>
        <text>Preferential release of a C-terminal arginine or lysine residue.</text>
        <dbReference type="EC" id="3.4.16.6"/>
    </reaction>
</comment>
<comment type="subcellular location">
    <subcellularLocation>
        <location evidence="1">Golgi apparatus</location>
        <location evidence="1">trans-Golgi network membrane</location>
        <topology evidence="1">Single-pass type I membrane protein</topology>
    </subcellularLocation>
</comment>
<comment type="similarity">
    <text evidence="5">Belongs to the peptidase S10 family.</text>
</comment>
<protein>
    <recommendedName>
        <fullName>Pheromone-processing carboxypeptidase KEX1</fullName>
        <ecNumber>3.4.16.6</ecNumber>
    </recommendedName>
    <alternativeName>
        <fullName>Carboxypeptidase D</fullName>
    </alternativeName>
</protein>
<accession>D1ZEM2</accession>
<accession>F7W440</accession>
<evidence type="ECO:0000250" key="1"/>
<evidence type="ECO:0000255" key="2"/>
<evidence type="ECO:0000255" key="3">
    <source>
        <dbReference type="PROSITE-ProRule" id="PRU10074"/>
    </source>
</evidence>
<evidence type="ECO:0000256" key="4">
    <source>
        <dbReference type="SAM" id="MobiDB-lite"/>
    </source>
</evidence>
<evidence type="ECO:0000305" key="5"/>
<keyword id="KW-0053">Apoptosis</keyword>
<keyword id="KW-0121">Carboxypeptidase</keyword>
<keyword id="KW-0325">Glycoprotein</keyword>
<keyword id="KW-0333">Golgi apparatus</keyword>
<keyword id="KW-0378">Hydrolase</keyword>
<keyword id="KW-0472">Membrane</keyword>
<keyword id="KW-0645">Protease</keyword>
<keyword id="KW-1185">Reference proteome</keyword>
<keyword id="KW-0732">Signal</keyword>
<keyword id="KW-0812">Transmembrane</keyword>
<keyword id="KW-1133">Transmembrane helix</keyword>
<sequence>MAATTNAGRSMASWRRLPTLIAAFTLSWASSFVAAAGSADYFVHDLPGAPDGPLVKMHAGHIEVNPENNGNLFFWHFQNKHIANKQRTVIWLNGGPGCSSEDGALMEIGPYRLKDENTLVYNDGAWNEFANVLFVDNPVGTGFSYVDTNAYIHELTEMASNFITFLERWFALFPEYEHDDLYIAGESYAGQYIPYIAQAIIERNKNAGPVNHKWNLAGLLIGNGWISPKEQYEAYLQFAYEKGIVKKGTDLATRLENPTALCQLKITESPDKIDYTECEEILQDMLQQTAGGVGASGKPQCYNMYDVRLKDDYPSCGMAWPPDLKSVTPYLRKKEVIKALNINENKSTGWTECNGQVGLNFHPKTKPSITLLPDILSSGVPILLFSGAEDLICNHLGTEALISNMEWNGGKGFELTPGTWATRRDWTFEGEPAGFWQQARNLTYVLFYNSSHMAPFDYPRRTRDMLDRFMGVDISSIGGQPTDSRLDGEKLPETTVGGAAGNSTSNQAAEKAKLEMAKWEAYRKSGELVLVIVIVAAAIWGWFVWKDRRKTAGQGYMGVATGERHSISTNPSGSRQGNVSGRTRGQGLEGFRNKRSGRRDVEAQDFDESELDDLHLSKPEDPHADSRYSIGDASDDEDGQKPEKSSSSGQAGRS</sequence>
<feature type="signal peptide" evidence="2">
    <location>
        <begin position="1"/>
        <end position="29"/>
    </location>
</feature>
<feature type="chain" id="PRO_0000411946" description="Pheromone-processing carboxypeptidase KEX1">
    <location>
        <begin position="30"/>
        <end position="654"/>
    </location>
</feature>
<feature type="topological domain" description="Lumenal" evidence="2">
    <location>
        <begin position="30"/>
        <end position="524"/>
    </location>
</feature>
<feature type="transmembrane region" description="Helical" evidence="2">
    <location>
        <begin position="525"/>
        <end position="545"/>
    </location>
</feature>
<feature type="topological domain" description="Cytoplasmic" evidence="2">
    <location>
        <begin position="546"/>
        <end position="654"/>
    </location>
</feature>
<feature type="region of interest" description="Disordered" evidence="4">
    <location>
        <begin position="563"/>
        <end position="654"/>
    </location>
</feature>
<feature type="compositionally biased region" description="Polar residues" evidence="4">
    <location>
        <begin position="567"/>
        <end position="583"/>
    </location>
</feature>
<feature type="compositionally biased region" description="Basic and acidic residues" evidence="4">
    <location>
        <begin position="612"/>
        <end position="626"/>
    </location>
</feature>
<feature type="compositionally biased region" description="Polar residues" evidence="4">
    <location>
        <begin position="645"/>
        <end position="654"/>
    </location>
</feature>
<feature type="active site" evidence="3">
    <location>
        <position position="187"/>
    </location>
</feature>
<feature type="active site" evidence="3">
    <location>
        <position position="390"/>
    </location>
</feature>
<feature type="active site" evidence="3">
    <location>
        <position position="452"/>
    </location>
</feature>
<feature type="glycosylation site" description="N-linked (GlcNAc...) asparagine" evidence="2">
    <location>
        <position position="345"/>
    </location>
</feature>
<feature type="glycosylation site" description="N-linked (GlcNAc...) asparagine" evidence="2">
    <location>
        <position position="441"/>
    </location>
</feature>
<feature type="glycosylation site" description="N-linked (GlcNAc...) asparagine" evidence="2">
    <location>
        <position position="449"/>
    </location>
</feature>
<feature type="glycosylation site" description="N-linked (GlcNAc...) asparagine" evidence="2">
    <location>
        <position position="502"/>
    </location>
</feature>
<name>KEX1_SORMK</name>
<reference key="1">
    <citation type="journal article" date="2010" name="PLoS Genet.">
        <title>De novo assembly of a 40 Mb eukaryotic genome from short sequence reads: Sordaria macrospora, a model organism for fungal morphogenesis.</title>
        <authorList>
            <person name="Nowrousian M."/>
            <person name="Stajich J.E."/>
            <person name="Chu M."/>
            <person name="Engh I."/>
            <person name="Espagne E."/>
            <person name="Halliday K."/>
            <person name="Kamerewerd J."/>
            <person name="Kempken F."/>
            <person name="Knab B."/>
            <person name="Kuo H.-C."/>
            <person name="Osiewacz H.D."/>
            <person name="Poeggeler S."/>
            <person name="Read N.D."/>
            <person name="Seiler S."/>
            <person name="Smith K.M."/>
            <person name="Zickler D."/>
            <person name="Kueck U."/>
            <person name="Freitag M."/>
        </authorList>
    </citation>
    <scope>NUCLEOTIDE SEQUENCE [LARGE SCALE GENOMIC DNA]</scope>
    <source>
        <strain>ATCC MYA-333 / DSM 997 / K(L3346) / K-hell</strain>
    </source>
</reference>
<gene>
    <name type="primary">KEX1</name>
    <name type="ORF">SMAC_05571</name>
</gene>
<proteinExistence type="inferred from homology"/>